<reference key="1">
    <citation type="journal article" date="1991" name="Yeast">
        <title>The DNA sequencing of the 17 kb HindIII fragment spanning the LEU1 and ATE1 loci on chromosome VII from Saccharomyces cerevisiae reveals the PDR6 gene, a new member of the genetic network controlling pleiotropic drug resistance.</title>
        <authorList>
            <person name="Chen W."/>
            <person name="Balzi E."/>
            <person name="Capieaux E."/>
            <person name="Choder M."/>
            <person name="Goffeau A."/>
        </authorList>
    </citation>
    <scope>NUCLEOTIDE SEQUENCE [GENOMIC DNA]</scope>
    <source>
        <strain>ATCC 46191 / IL125-2B</strain>
    </source>
</reference>
<reference key="2">
    <citation type="journal article" date="1997" name="Nature">
        <title>The nucleotide sequence of Saccharomyces cerevisiae chromosome VII.</title>
        <authorList>
            <person name="Tettelin H."/>
            <person name="Agostoni-Carbone M.L."/>
            <person name="Albermann K."/>
            <person name="Albers M."/>
            <person name="Arroyo J."/>
            <person name="Backes U."/>
            <person name="Barreiros T."/>
            <person name="Bertani I."/>
            <person name="Bjourson A.J."/>
            <person name="Brueckner M."/>
            <person name="Bruschi C.V."/>
            <person name="Carignani G."/>
            <person name="Castagnoli L."/>
            <person name="Cerdan E."/>
            <person name="Clemente M.L."/>
            <person name="Coblenz A."/>
            <person name="Coglievina M."/>
            <person name="Coissac E."/>
            <person name="Defoor E."/>
            <person name="Del Bino S."/>
            <person name="Delius H."/>
            <person name="Delneri D."/>
            <person name="de Wergifosse P."/>
            <person name="Dujon B."/>
            <person name="Durand P."/>
            <person name="Entian K.-D."/>
            <person name="Eraso P."/>
            <person name="Escribano V."/>
            <person name="Fabiani L."/>
            <person name="Fartmann B."/>
            <person name="Feroli F."/>
            <person name="Feuermann M."/>
            <person name="Frontali L."/>
            <person name="Garcia-Gonzalez M."/>
            <person name="Garcia-Saez M.I."/>
            <person name="Goffeau A."/>
            <person name="Guerreiro P."/>
            <person name="Hani J."/>
            <person name="Hansen M."/>
            <person name="Hebling U."/>
            <person name="Hernandez K."/>
            <person name="Heumann K."/>
            <person name="Hilger F."/>
            <person name="Hofmann B."/>
            <person name="Indge K.J."/>
            <person name="James C.M."/>
            <person name="Klima R."/>
            <person name="Koetter P."/>
            <person name="Kramer B."/>
            <person name="Kramer W."/>
            <person name="Lauquin G."/>
            <person name="Leuther H."/>
            <person name="Louis E.J."/>
            <person name="Maillier E."/>
            <person name="Marconi A."/>
            <person name="Martegani E."/>
            <person name="Mazon M.J."/>
            <person name="Mazzoni C."/>
            <person name="McReynolds A.D.K."/>
            <person name="Melchioretto P."/>
            <person name="Mewes H.-W."/>
            <person name="Minenkova O."/>
            <person name="Mueller-Auer S."/>
            <person name="Nawrocki A."/>
            <person name="Netter P."/>
            <person name="Neu R."/>
            <person name="Nombela C."/>
            <person name="Oliver S.G."/>
            <person name="Panzeri L."/>
            <person name="Paoluzi S."/>
            <person name="Plevani P."/>
            <person name="Portetelle D."/>
            <person name="Portillo F."/>
            <person name="Potier S."/>
            <person name="Purnelle B."/>
            <person name="Rieger M."/>
            <person name="Riles L."/>
            <person name="Rinaldi T."/>
            <person name="Robben J."/>
            <person name="Rodrigues-Pousada C."/>
            <person name="Rodriguez-Belmonte E."/>
            <person name="Rodriguez-Torres A.M."/>
            <person name="Rose M."/>
            <person name="Ruzzi M."/>
            <person name="Saliola M."/>
            <person name="Sanchez-Perez M."/>
            <person name="Schaefer B."/>
            <person name="Schaefer M."/>
            <person name="Scharfe M."/>
            <person name="Schmidheini T."/>
            <person name="Schreer A."/>
            <person name="Skala J."/>
            <person name="Souciet J.-L."/>
            <person name="Steensma H.Y."/>
            <person name="Talla E."/>
            <person name="Thierry A."/>
            <person name="Vandenbol M."/>
            <person name="van der Aart Q.J.M."/>
            <person name="Van Dyck L."/>
            <person name="Vanoni M."/>
            <person name="Verhasselt P."/>
            <person name="Voet M."/>
            <person name="Volckaert G."/>
            <person name="Wambutt R."/>
            <person name="Watson M.D."/>
            <person name="Weber N."/>
            <person name="Wedler E."/>
            <person name="Wedler H."/>
            <person name="Wipfli P."/>
            <person name="Wolf K."/>
            <person name="Wright L.F."/>
            <person name="Zaccaria P."/>
            <person name="Zimmermann M."/>
            <person name="Zollner A."/>
            <person name="Kleine K."/>
        </authorList>
    </citation>
    <scope>NUCLEOTIDE SEQUENCE [LARGE SCALE GENOMIC DNA]</scope>
    <source>
        <strain>ATCC 204508 / S288c</strain>
    </source>
</reference>
<reference key="3">
    <citation type="journal article" date="2014" name="G3 (Bethesda)">
        <title>The reference genome sequence of Saccharomyces cerevisiae: Then and now.</title>
        <authorList>
            <person name="Engel S.R."/>
            <person name="Dietrich F.S."/>
            <person name="Fisk D.G."/>
            <person name="Binkley G."/>
            <person name="Balakrishnan R."/>
            <person name="Costanzo M.C."/>
            <person name="Dwight S.S."/>
            <person name="Hitz B.C."/>
            <person name="Karra K."/>
            <person name="Nash R.S."/>
            <person name="Weng S."/>
            <person name="Wong E.D."/>
            <person name="Lloyd P."/>
            <person name="Skrzypek M.S."/>
            <person name="Miyasato S.R."/>
            <person name="Simison M."/>
            <person name="Cherry J.M."/>
        </authorList>
    </citation>
    <scope>GENOME REANNOTATION</scope>
    <source>
        <strain>ATCC 204508 / S288c</strain>
    </source>
</reference>
<protein>
    <recommendedName>
        <fullName>Uncharacterized protein YGL015C</fullName>
    </recommendedName>
</protein>
<organism>
    <name type="scientific">Saccharomyces cerevisiae (strain ATCC 204508 / S288c)</name>
    <name type="common">Baker's yeast</name>
    <dbReference type="NCBI Taxonomy" id="559292"/>
    <lineage>
        <taxon>Eukaryota</taxon>
        <taxon>Fungi</taxon>
        <taxon>Dikarya</taxon>
        <taxon>Ascomycota</taxon>
        <taxon>Saccharomycotina</taxon>
        <taxon>Saccharomycetes</taxon>
        <taxon>Saccharomycetales</taxon>
        <taxon>Saccharomycetaceae</taxon>
        <taxon>Saccharomyces</taxon>
    </lineage>
</organism>
<proteinExistence type="predicted"/>
<keyword id="KW-1185">Reference proteome</keyword>
<gene>
    <name type="ordered locus">YGL015C</name>
    <name type="ORF">YGL026</name>
</gene>
<sequence length="130" mass="14961">MEDTIRPLNYADIETSGPINLLETTNNLKSSLKKFSQKAKGSHISRERIHHFRKWKNKTESLSENHLKPPPDVDSLCFSNCFQPDALSGNVFLPPRSSNMYWNEKQLQLEMEILKFLSLNTSNECCTSDD</sequence>
<feature type="chain" id="PRO_0000202775" description="Uncharacterized protein YGL015C">
    <location>
        <begin position="1"/>
        <end position="130"/>
    </location>
</feature>
<accession>P33199</accession>
<accession>D6VUC2</accession>
<name>YGB5_YEAST</name>
<dbReference type="EMBL" id="S58126">
    <property type="protein sequence ID" value="AAD13899.1"/>
    <property type="molecule type" value="Genomic_DNA"/>
</dbReference>
<dbReference type="EMBL" id="Z72537">
    <property type="protein sequence ID" value="CAA96715.1"/>
    <property type="molecule type" value="Genomic_DNA"/>
</dbReference>
<dbReference type="EMBL" id="BK006941">
    <property type="protein sequence ID" value="DAA08083.1"/>
    <property type="molecule type" value="Genomic_DNA"/>
</dbReference>
<dbReference type="PIR" id="S31562">
    <property type="entry name" value="S31562"/>
</dbReference>
<dbReference type="SMR" id="P33199"/>
<dbReference type="BioGRID" id="33231">
    <property type="interactions" value="25"/>
</dbReference>
<dbReference type="DIP" id="DIP-1221N"/>
<dbReference type="FunCoup" id="P33199">
    <property type="interactions" value="3"/>
</dbReference>
<dbReference type="IntAct" id="P33199">
    <property type="interactions" value="3"/>
</dbReference>
<dbReference type="MINT" id="P33199"/>
<dbReference type="STRING" id="4932.YGL015C"/>
<dbReference type="PaxDb" id="4932-YGL015C"/>
<dbReference type="EnsemblFungi" id="YGL015C_mRNA">
    <property type="protein sequence ID" value="YGL015C"/>
    <property type="gene ID" value="YGL015C"/>
</dbReference>
<dbReference type="KEGG" id="sce:YGL015C"/>
<dbReference type="AGR" id="SGD:S000002983"/>
<dbReference type="SGD" id="S000002983">
    <property type="gene designation" value="YGL015C"/>
</dbReference>
<dbReference type="VEuPathDB" id="FungiDB:YGL015C"/>
<dbReference type="HOGENOM" id="CLU_1939758_0_0_1"/>
<dbReference type="InParanoid" id="P33199"/>
<dbReference type="OMA" id="XKGSHIS"/>
<dbReference type="OrthoDB" id="4039518at2759"/>
<dbReference type="BioCyc" id="YEAST:G3O-30536-MONOMER"/>
<dbReference type="BioGRID-ORCS" id="852869">
    <property type="hits" value="0 hits in 10 CRISPR screens"/>
</dbReference>
<dbReference type="PRO" id="PR:P33199"/>
<dbReference type="Proteomes" id="UP000002311">
    <property type="component" value="Chromosome VII"/>
</dbReference>
<dbReference type="RNAct" id="P33199">
    <property type="molecule type" value="protein"/>
</dbReference>
<dbReference type="GO" id="GO:0005829">
    <property type="term" value="C:cytosol"/>
    <property type="evidence" value="ECO:0000314"/>
    <property type="project" value="SGD"/>
</dbReference>
<dbReference type="GO" id="GO:0043332">
    <property type="term" value="C:mating projection tip"/>
    <property type="evidence" value="ECO:0000314"/>
    <property type="project" value="SGD"/>
</dbReference>
<dbReference type="GO" id="GO:0005628">
    <property type="term" value="C:prospore membrane"/>
    <property type="evidence" value="ECO:0007005"/>
    <property type="project" value="SGD"/>
</dbReference>
<dbReference type="GO" id="GO:0099503">
    <property type="term" value="C:secretory vesicle"/>
    <property type="evidence" value="ECO:0000314"/>
    <property type="project" value="SGD"/>
</dbReference>
<dbReference type="GO" id="GO:0030427">
    <property type="term" value="C:site of polarized growth"/>
    <property type="evidence" value="ECO:0000314"/>
    <property type="project" value="SGD"/>
</dbReference>
<dbReference type="GO" id="GO:0090339">
    <property type="term" value="P:negative regulation of formin-nucleated actin cable assembly"/>
    <property type="evidence" value="ECO:0000314"/>
    <property type="project" value="SGD"/>
</dbReference>
<dbReference type="GO" id="GO:1903260">
    <property type="term" value="P:protein localization to mating projection tip"/>
    <property type="evidence" value="ECO:0000315"/>
    <property type="project" value="SGD"/>
</dbReference>